<name>ARTQ_BACSU</name>
<feature type="chain" id="PRO_0000060273" description="Arginine transport system permease protein ArtQ">
    <location>
        <begin position="1"/>
        <end position="219"/>
    </location>
</feature>
<feature type="transmembrane region" description="Helical" evidence="1">
    <location>
        <begin position="19"/>
        <end position="39"/>
    </location>
</feature>
<feature type="transmembrane region" description="Helical" evidence="1">
    <location>
        <begin position="51"/>
        <end position="73"/>
    </location>
</feature>
<feature type="transmembrane region" description="Helical" evidence="1">
    <location>
        <begin position="88"/>
        <end position="108"/>
    </location>
</feature>
<feature type="transmembrane region" description="Helical" evidence="1">
    <location>
        <begin position="149"/>
        <end position="169"/>
    </location>
</feature>
<feature type="transmembrane region" description="Helical" evidence="1">
    <location>
        <begin position="187"/>
        <end position="207"/>
    </location>
</feature>
<feature type="domain" description="ABC transmembrane type-1" evidence="1">
    <location>
        <begin position="19"/>
        <end position="208"/>
    </location>
</feature>
<protein>
    <recommendedName>
        <fullName>Arginine transport system permease protein ArtQ</fullName>
    </recommendedName>
</protein>
<gene>
    <name type="primary">artQ</name>
    <name type="synonym">yqiY</name>
    <name type="ordered locus">BSU23970</name>
</gene>
<organism>
    <name type="scientific">Bacillus subtilis (strain 168)</name>
    <dbReference type="NCBI Taxonomy" id="224308"/>
    <lineage>
        <taxon>Bacteria</taxon>
        <taxon>Bacillati</taxon>
        <taxon>Bacillota</taxon>
        <taxon>Bacilli</taxon>
        <taxon>Bacillales</taxon>
        <taxon>Bacillaceae</taxon>
        <taxon>Bacillus</taxon>
    </lineage>
</organism>
<evidence type="ECO:0000255" key="1">
    <source>
        <dbReference type="PROSITE-ProRule" id="PRU00441"/>
    </source>
</evidence>
<evidence type="ECO:0000269" key="2">
    <source>
    </source>
</evidence>
<evidence type="ECO:0000305" key="3"/>
<reference key="1">
    <citation type="journal article" date="1996" name="Microbiology">
        <title>Systematic sequencing of the 283 kb 210 degrees-232 degrees region of the Bacillus subtilis genome containing the skin element and many sporulation genes.</title>
        <authorList>
            <person name="Mizuno M."/>
            <person name="Masuda S."/>
            <person name="Takemaru K."/>
            <person name="Hosono S."/>
            <person name="Sato T."/>
            <person name="Takeuchi M."/>
            <person name="Kobayashi Y."/>
        </authorList>
    </citation>
    <scope>NUCLEOTIDE SEQUENCE [GENOMIC DNA]</scope>
    <source>
        <strain>168 / JH642</strain>
    </source>
</reference>
<reference key="2">
    <citation type="journal article" date="1997" name="Nature">
        <title>The complete genome sequence of the Gram-positive bacterium Bacillus subtilis.</title>
        <authorList>
            <person name="Kunst F."/>
            <person name="Ogasawara N."/>
            <person name="Moszer I."/>
            <person name="Albertini A.M."/>
            <person name="Alloni G."/>
            <person name="Azevedo V."/>
            <person name="Bertero M.G."/>
            <person name="Bessieres P."/>
            <person name="Bolotin A."/>
            <person name="Borchert S."/>
            <person name="Borriss R."/>
            <person name="Boursier L."/>
            <person name="Brans A."/>
            <person name="Braun M."/>
            <person name="Brignell S.C."/>
            <person name="Bron S."/>
            <person name="Brouillet S."/>
            <person name="Bruschi C.V."/>
            <person name="Caldwell B."/>
            <person name="Capuano V."/>
            <person name="Carter N.M."/>
            <person name="Choi S.-K."/>
            <person name="Codani J.-J."/>
            <person name="Connerton I.F."/>
            <person name="Cummings N.J."/>
            <person name="Daniel R.A."/>
            <person name="Denizot F."/>
            <person name="Devine K.M."/>
            <person name="Duesterhoeft A."/>
            <person name="Ehrlich S.D."/>
            <person name="Emmerson P.T."/>
            <person name="Entian K.-D."/>
            <person name="Errington J."/>
            <person name="Fabret C."/>
            <person name="Ferrari E."/>
            <person name="Foulger D."/>
            <person name="Fritz C."/>
            <person name="Fujita M."/>
            <person name="Fujita Y."/>
            <person name="Fuma S."/>
            <person name="Galizzi A."/>
            <person name="Galleron N."/>
            <person name="Ghim S.-Y."/>
            <person name="Glaser P."/>
            <person name="Goffeau A."/>
            <person name="Golightly E.J."/>
            <person name="Grandi G."/>
            <person name="Guiseppi G."/>
            <person name="Guy B.J."/>
            <person name="Haga K."/>
            <person name="Haiech J."/>
            <person name="Harwood C.R."/>
            <person name="Henaut A."/>
            <person name="Hilbert H."/>
            <person name="Holsappel S."/>
            <person name="Hosono S."/>
            <person name="Hullo M.-F."/>
            <person name="Itaya M."/>
            <person name="Jones L.-M."/>
            <person name="Joris B."/>
            <person name="Karamata D."/>
            <person name="Kasahara Y."/>
            <person name="Klaerr-Blanchard M."/>
            <person name="Klein C."/>
            <person name="Kobayashi Y."/>
            <person name="Koetter P."/>
            <person name="Koningstein G."/>
            <person name="Krogh S."/>
            <person name="Kumano M."/>
            <person name="Kurita K."/>
            <person name="Lapidus A."/>
            <person name="Lardinois S."/>
            <person name="Lauber J."/>
            <person name="Lazarevic V."/>
            <person name="Lee S.-M."/>
            <person name="Levine A."/>
            <person name="Liu H."/>
            <person name="Masuda S."/>
            <person name="Mauel C."/>
            <person name="Medigue C."/>
            <person name="Medina N."/>
            <person name="Mellado R.P."/>
            <person name="Mizuno M."/>
            <person name="Moestl D."/>
            <person name="Nakai S."/>
            <person name="Noback M."/>
            <person name="Noone D."/>
            <person name="O'Reilly M."/>
            <person name="Ogawa K."/>
            <person name="Ogiwara A."/>
            <person name="Oudega B."/>
            <person name="Park S.-H."/>
            <person name="Parro V."/>
            <person name="Pohl T.M."/>
            <person name="Portetelle D."/>
            <person name="Porwollik S."/>
            <person name="Prescott A.M."/>
            <person name="Presecan E."/>
            <person name="Pujic P."/>
            <person name="Purnelle B."/>
            <person name="Rapoport G."/>
            <person name="Rey M."/>
            <person name="Reynolds S."/>
            <person name="Rieger M."/>
            <person name="Rivolta C."/>
            <person name="Rocha E."/>
            <person name="Roche B."/>
            <person name="Rose M."/>
            <person name="Sadaie Y."/>
            <person name="Sato T."/>
            <person name="Scanlan E."/>
            <person name="Schleich S."/>
            <person name="Schroeter R."/>
            <person name="Scoffone F."/>
            <person name="Sekiguchi J."/>
            <person name="Sekowska A."/>
            <person name="Seror S.J."/>
            <person name="Serror P."/>
            <person name="Shin B.-S."/>
            <person name="Soldo B."/>
            <person name="Sorokin A."/>
            <person name="Tacconi E."/>
            <person name="Takagi T."/>
            <person name="Takahashi H."/>
            <person name="Takemaru K."/>
            <person name="Takeuchi M."/>
            <person name="Tamakoshi A."/>
            <person name="Tanaka T."/>
            <person name="Terpstra P."/>
            <person name="Tognoni A."/>
            <person name="Tosato V."/>
            <person name="Uchiyama S."/>
            <person name="Vandenbol M."/>
            <person name="Vannier F."/>
            <person name="Vassarotti A."/>
            <person name="Viari A."/>
            <person name="Wambutt R."/>
            <person name="Wedler E."/>
            <person name="Wedler H."/>
            <person name="Weitzenegger T."/>
            <person name="Winters P."/>
            <person name="Wipat A."/>
            <person name="Yamamoto H."/>
            <person name="Yamane K."/>
            <person name="Yasumoto K."/>
            <person name="Yata K."/>
            <person name="Yoshida K."/>
            <person name="Yoshikawa H.-F."/>
            <person name="Zumstein E."/>
            <person name="Yoshikawa H."/>
            <person name="Danchin A."/>
        </authorList>
    </citation>
    <scope>NUCLEOTIDE SEQUENCE [LARGE SCALE GENOMIC DNA]</scope>
    <source>
        <strain>168</strain>
    </source>
</reference>
<reference key="3">
    <citation type="journal article" date="2001" name="Genome Biol.">
        <title>Extracting biological information from DNA arrays: an unexpected link between arginine and methionine metabolism in Bacillus subtilis.</title>
        <authorList>
            <person name="Sekowska A."/>
            <person name="Robin S."/>
            <person name="Daudin J.-J."/>
            <person name="Henaut A."/>
            <person name="Danchin A."/>
        </authorList>
    </citation>
    <scope>FUNCTION IN ARGININE TRANSPORT</scope>
    <scope>DISRUPTION PHENOTYPE</scope>
    <source>
        <strain>168</strain>
    </source>
</reference>
<accession>P54536</accession>
<dbReference type="EMBL" id="D84432">
    <property type="protein sequence ID" value="BAA12605.1"/>
    <property type="molecule type" value="Genomic_DNA"/>
</dbReference>
<dbReference type="EMBL" id="AL009126">
    <property type="protein sequence ID" value="CAB14328.1"/>
    <property type="molecule type" value="Genomic_DNA"/>
</dbReference>
<dbReference type="PIR" id="G69962">
    <property type="entry name" value="G69962"/>
</dbReference>
<dbReference type="RefSeq" id="NP_390277.1">
    <property type="nucleotide sequence ID" value="NC_000964.3"/>
</dbReference>
<dbReference type="RefSeq" id="WP_003230340.1">
    <property type="nucleotide sequence ID" value="NZ_OZ025638.1"/>
</dbReference>
<dbReference type="SMR" id="P54536"/>
<dbReference type="FunCoup" id="P54536">
    <property type="interactions" value="134"/>
</dbReference>
<dbReference type="STRING" id="224308.BSU23970"/>
<dbReference type="TCDB" id="3.A.1.3.15">
    <property type="family name" value="the atp-binding cassette (abc) superfamily"/>
</dbReference>
<dbReference type="PaxDb" id="224308-BSU23970"/>
<dbReference type="EnsemblBacteria" id="CAB14328">
    <property type="protein sequence ID" value="CAB14328"/>
    <property type="gene ID" value="BSU_23970"/>
</dbReference>
<dbReference type="GeneID" id="938678"/>
<dbReference type="KEGG" id="bsu:BSU23970"/>
<dbReference type="PATRIC" id="fig|224308.179.peg.2611"/>
<dbReference type="eggNOG" id="COG0765">
    <property type="taxonomic scope" value="Bacteria"/>
</dbReference>
<dbReference type="InParanoid" id="P54536"/>
<dbReference type="OrthoDB" id="9774451at2"/>
<dbReference type="PhylomeDB" id="P54536"/>
<dbReference type="BioCyc" id="BSUB:BSU23970-MONOMER"/>
<dbReference type="Proteomes" id="UP000001570">
    <property type="component" value="Chromosome"/>
</dbReference>
<dbReference type="GO" id="GO:0043190">
    <property type="term" value="C:ATP-binding cassette (ABC) transporter complex"/>
    <property type="evidence" value="ECO:0007669"/>
    <property type="project" value="InterPro"/>
</dbReference>
<dbReference type="GO" id="GO:0005886">
    <property type="term" value="C:plasma membrane"/>
    <property type="evidence" value="ECO:0000318"/>
    <property type="project" value="GO_Central"/>
</dbReference>
<dbReference type="GO" id="GO:0022857">
    <property type="term" value="F:transmembrane transporter activity"/>
    <property type="evidence" value="ECO:0007669"/>
    <property type="project" value="InterPro"/>
</dbReference>
<dbReference type="GO" id="GO:0006865">
    <property type="term" value="P:amino acid transport"/>
    <property type="evidence" value="ECO:0000318"/>
    <property type="project" value="GO_Central"/>
</dbReference>
<dbReference type="CDD" id="cd06261">
    <property type="entry name" value="TM_PBP2"/>
    <property type="match status" value="1"/>
</dbReference>
<dbReference type="FunFam" id="1.10.3720.10:FF:000053">
    <property type="entry name" value="Amino acid ABC transporter permease"/>
    <property type="match status" value="1"/>
</dbReference>
<dbReference type="Gene3D" id="1.10.3720.10">
    <property type="entry name" value="MetI-like"/>
    <property type="match status" value="1"/>
</dbReference>
<dbReference type="InterPro" id="IPR010065">
    <property type="entry name" value="AA_ABC_transptr_permease_3TM"/>
</dbReference>
<dbReference type="InterPro" id="IPR043429">
    <property type="entry name" value="ArtM/GltK/GlnP/TcyL/YhdX-like"/>
</dbReference>
<dbReference type="InterPro" id="IPR000515">
    <property type="entry name" value="MetI-like"/>
</dbReference>
<dbReference type="InterPro" id="IPR035906">
    <property type="entry name" value="MetI-like_sf"/>
</dbReference>
<dbReference type="NCBIfam" id="TIGR01726">
    <property type="entry name" value="HEQRo_perm_3TM"/>
    <property type="match status" value="1"/>
</dbReference>
<dbReference type="PANTHER" id="PTHR30614:SF20">
    <property type="entry name" value="GLUTAMINE TRANSPORT SYSTEM PERMEASE PROTEIN GLNP"/>
    <property type="match status" value="1"/>
</dbReference>
<dbReference type="PANTHER" id="PTHR30614">
    <property type="entry name" value="MEMBRANE COMPONENT OF AMINO ACID ABC TRANSPORTER"/>
    <property type="match status" value="1"/>
</dbReference>
<dbReference type="Pfam" id="PF00528">
    <property type="entry name" value="BPD_transp_1"/>
    <property type="match status" value="1"/>
</dbReference>
<dbReference type="SUPFAM" id="SSF161098">
    <property type="entry name" value="MetI-like"/>
    <property type="match status" value="1"/>
</dbReference>
<dbReference type="PROSITE" id="PS50928">
    <property type="entry name" value="ABC_TM1"/>
    <property type="match status" value="1"/>
</dbReference>
<proteinExistence type="evidence at protein level"/>
<keyword id="KW-0029">Amino-acid transport</keyword>
<keyword id="KW-1003">Cell membrane</keyword>
<keyword id="KW-0472">Membrane</keyword>
<keyword id="KW-1185">Reference proteome</keyword>
<keyword id="KW-0812">Transmembrane</keyword>
<keyword id="KW-1133">Transmembrane helix</keyword>
<keyword id="KW-0813">Transport</keyword>
<sequence>MNLDFSATIPQIPFILEGLAITLKIVVVSAIIGLILGIVLSLCKISTFRPFIWIADFYTSVFRGTPLVLQLMIVYFGLPQLLGFQIDQFWAAVVALSLNSAAYVSEIIRAGINAIDKGQKEAAVALGVPYGKMMKDLLLPQAFKNISPAIVNELITLTKESAIVTVIGLGDVMRRAYQAGAATYNYLEPLIIAGLIYYVLVLILTFIGKAVERKLKSND</sequence>
<comment type="function">
    <text evidence="2">Part of a binding-protein-dependent transport system for arginine. Probably responsible for the translocation of the substrate across the membrane.</text>
</comment>
<comment type="subcellular location">
    <subcellularLocation>
        <location evidence="3">Cell membrane</location>
        <topology evidence="1">Multi-pass membrane protein</topology>
    </subcellularLocation>
</comment>
<comment type="disruption phenotype">
    <text evidence="2">Cells show impaired growth on arginine as the nitrogen source.</text>
</comment>
<comment type="similarity">
    <text evidence="3">Belongs to the binding-protein-dependent transport system permease family. HisMQ subfamily.</text>
</comment>